<comment type="function">
    <text evidence="1">Accessory subunit of the mitochondrial membrane respiratory chain NADH dehydrogenase (Complex I), that is believed not to be involved in catalysis. Complex I functions in the transfer of electrons from NADH to the respiratory chain. The immediate electron acceptor for the enzyme is believed to be ubiquinone (By similarity).</text>
</comment>
<comment type="subunit">
    <text evidence="1">Complex I is composed of 45 different subunits.</text>
</comment>
<comment type="subcellular location">
    <subcellularLocation>
        <location evidence="1">Mitochondrion inner membrane</location>
        <topology evidence="1">Peripheral membrane protein</topology>
        <orientation evidence="1">Matrix side</orientation>
    </subcellularLocation>
</comment>
<comment type="similarity">
    <text evidence="2">Belongs to the complex I NDUFB2 subunit family.</text>
</comment>
<sequence length="160" mass="18397">MLGNKFVAQLALQQLKNRGLLTSAPRLTSVRHRFAWGSDAVGPNVPVGGKMGASENPELHTYDGDYRGTISKGDKPIPDYFYRTPTTGRTYIDRCVTYFISAVIWAWFSYHMYYHSGHLLGHWYMPYLTEFSDEELGIPKDSAEDPEYWGNHKKEYGTYR</sequence>
<gene>
    <name type="ORF">CBG03233</name>
</gene>
<dbReference type="EMBL" id="HE601438">
    <property type="protein sequence ID" value="CAP23434.1"/>
    <property type="molecule type" value="Genomic_DNA"/>
</dbReference>
<dbReference type="RefSeq" id="XP_002631391.1">
    <property type="nucleotide sequence ID" value="XM_002631345.1"/>
</dbReference>
<dbReference type="SMR" id="Q61Z75"/>
<dbReference type="FunCoup" id="Q61Z75">
    <property type="interactions" value="113"/>
</dbReference>
<dbReference type="STRING" id="6238.Q61Z75"/>
<dbReference type="EnsemblMetazoa" id="CBG03233.1">
    <property type="protein sequence ID" value="CBG03233.1"/>
    <property type="gene ID" value="WBGene00026135"/>
</dbReference>
<dbReference type="GeneID" id="8573390"/>
<dbReference type="KEGG" id="cbr:CBG_03233"/>
<dbReference type="CTD" id="8573390"/>
<dbReference type="WormBase" id="CBG03233">
    <property type="protein sequence ID" value="CBP14524"/>
    <property type="gene ID" value="WBGene00026135"/>
</dbReference>
<dbReference type="eggNOG" id="ENOG502SBCC">
    <property type="taxonomic scope" value="Eukaryota"/>
</dbReference>
<dbReference type="HOGENOM" id="CLU_1629042_0_0_1"/>
<dbReference type="InParanoid" id="Q61Z75"/>
<dbReference type="OMA" id="LWGWFVY"/>
<dbReference type="OrthoDB" id="6241903at2759"/>
<dbReference type="Proteomes" id="UP000008549">
    <property type="component" value="Unassembled WGS sequence"/>
</dbReference>
<dbReference type="GO" id="GO:0005743">
    <property type="term" value="C:mitochondrial inner membrane"/>
    <property type="evidence" value="ECO:0007669"/>
    <property type="project" value="UniProtKB-SubCell"/>
</dbReference>
<dbReference type="GO" id="GO:0045271">
    <property type="term" value="C:respiratory chain complex I"/>
    <property type="evidence" value="ECO:0000318"/>
    <property type="project" value="GO_Central"/>
</dbReference>
<dbReference type="GO" id="GO:0032981">
    <property type="term" value="P:mitochondrial respiratory chain complex I assembly"/>
    <property type="evidence" value="ECO:0000318"/>
    <property type="project" value="GO_Central"/>
</dbReference>
<dbReference type="InterPro" id="IPR026627">
    <property type="entry name" value="NDUFB2_animal"/>
</dbReference>
<dbReference type="PANTHER" id="PTHR15223:SF1">
    <property type="entry name" value="NADH DEHYDROGENASE [UBIQUINONE] 1 BETA SUBCOMPLEX SUBUNIT 2, MITOCHONDRIAL"/>
    <property type="match status" value="1"/>
</dbReference>
<dbReference type="PANTHER" id="PTHR15223">
    <property type="entry name" value="NADH-UBIQUINONE OXIDOREDUCTASE AGGG SUBUNIT"/>
    <property type="match status" value="1"/>
</dbReference>
<dbReference type="Pfam" id="PF14813">
    <property type="entry name" value="NADH_B2"/>
    <property type="match status" value="1"/>
</dbReference>
<keyword id="KW-0249">Electron transport</keyword>
<keyword id="KW-0472">Membrane</keyword>
<keyword id="KW-0496">Mitochondrion</keyword>
<keyword id="KW-0999">Mitochondrion inner membrane</keyword>
<keyword id="KW-1185">Reference proteome</keyword>
<keyword id="KW-0679">Respiratory chain</keyword>
<keyword id="KW-0809">Transit peptide</keyword>
<keyword id="KW-0813">Transport</keyword>
<evidence type="ECO:0000250" key="1"/>
<evidence type="ECO:0000305" key="2"/>
<proteinExistence type="inferred from homology"/>
<organism>
    <name type="scientific">Caenorhabditis briggsae</name>
    <dbReference type="NCBI Taxonomy" id="6238"/>
    <lineage>
        <taxon>Eukaryota</taxon>
        <taxon>Metazoa</taxon>
        <taxon>Ecdysozoa</taxon>
        <taxon>Nematoda</taxon>
        <taxon>Chromadorea</taxon>
        <taxon>Rhabditida</taxon>
        <taxon>Rhabditina</taxon>
        <taxon>Rhabditomorpha</taxon>
        <taxon>Rhabditoidea</taxon>
        <taxon>Rhabditidae</taxon>
        <taxon>Peloderinae</taxon>
        <taxon>Caenorhabditis</taxon>
    </lineage>
</organism>
<feature type="transit peptide" description="Mitochondrion">
    <location>
        <begin position="1"/>
        <end status="unknown"/>
    </location>
</feature>
<feature type="chain" id="PRO_0000233981" description="Probable NADH dehydrogenase [ubiquinone] 1 beta subcomplex subunit 2, mitochondrial">
    <location>
        <begin status="unknown"/>
        <end position="160"/>
    </location>
</feature>
<name>NDUB2_CAEBR</name>
<accession>Q61Z75</accession>
<accession>A8WSH5</accession>
<protein>
    <recommendedName>
        <fullName>Probable NADH dehydrogenase [ubiquinone] 1 beta subcomplex subunit 2, mitochondrial</fullName>
    </recommendedName>
</protein>
<reference key="1">
    <citation type="journal article" date="2003" name="PLoS Biol.">
        <title>The genome sequence of Caenorhabditis briggsae: a platform for comparative genomics.</title>
        <authorList>
            <person name="Stein L.D."/>
            <person name="Bao Z."/>
            <person name="Blasiar D."/>
            <person name="Blumenthal T."/>
            <person name="Brent M.R."/>
            <person name="Chen N."/>
            <person name="Chinwalla A."/>
            <person name="Clarke L."/>
            <person name="Clee C."/>
            <person name="Coghlan A."/>
            <person name="Coulson A."/>
            <person name="D'Eustachio P."/>
            <person name="Fitch D.H.A."/>
            <person name="Fulton L.A."/>
            <person name="Fulton R.E."/>
            <person name="Griffiths-Jones S."/>
            <person name="Harris T.W."/>
            <person name="Hillier L.W."/>
            <person name="Kamath R."/>
            <person name="Kuwabara P.E."/>
            <person name="Mardis E.R."/>
            <person name="Marra M.A."/>
            <person name="Miner T.L."/>
            <person name="Minx P."/>
            <person name="Mullikin J.C."/>
            <person name="Plumb R.W."/>
            <person name="Rogers J."/>
            <person name="Schein J.E."/>
            <person name="Sohrmann M."/>
            <person name="Spieth J."/>
            <person name="Stajich J.E."/>
            <person name="Wei C."/>
            <person name="Willey D."/>
            <person name="Wilson R.K."/>
            <person name="Durbin R.M."/>
            <person name="Waterston R.H."/>
        </authorList>
    </citation>
    <scope>NUCLEOTIDE SEQUENCE [LARGE SCALE GENOMIC DNA]</scope>
    <source>
        <strain>AF16</strain>
    </source>
</reference>